<dbReference type="EMBL" id="CP000703">
    <property type="protein sequence ID" value="ABQ50192.1"/>
    <property type="molecule type" value="Genomic_DNA"/>
</dbReference>
<dbReference type="RefSeq" id="WP_000278556.1">
    <property type="nucleotide sequence ID" value="NC_009487.1"/>
</dbReference>
<dbReference type="SMR" id="A5IVG9"/>
<dbReference type="KEGG" id="saj:SaurJH9_2412"/>
<dbReference type="HOGENOM" id="CLU_001265_14_0_9"/>
<dbReference type="GO" id="GO:0005886">
    <property type="term" value="C:plasma membrane"/>
    <property type="evidence" value="ECO:0007669"/>
    <property type="project" value="UniProtKB-SubCell"/>
</dbReference>
<dbReference type="GO" id="GO:0015112">
    <property type="term" value="F:nitrate transmembrane transporter activity"/>
    <property type="evidence" value="ECO:0007669"/>
    <property type="project" value="InterPro"/>
</dbReference>
<dbReference type="GO" id="GO:0042128">
    <property type="term" value="P:nitrate assimilation"/>
    <property type="evidence" value="ECO:0007669"/>
    <property type="project" value="UniProtKB-KW"/>
</dbReference>
<dbReference type="CDD" id="cd17341">
    <property type="entry name" value="MFS_NRT2_like"/>
    <property type="match status" value="1"/>
</dbReference>
<dbReference type="Gene3D" id="1.20.1250.20">
    <property type="entry name" value="MFS general substrate transporter like domains"/>
    <property type="match status" value="2"/>
</dbReference>
<dbReference type="InterPro" id="IPR011701">
    <property type="entry name" value="MFS"/>
</dbReference>
<dbReference type="InterPro" id="IPR020846">
    <property type="entry name" value="MFS_dom"/>
</dbReference>
<dbReference type="InterPro" id="IPR036259">
    <property type="entry name" value="MFS_trans_sf"/>
</dbReference>
<dbReference type="InterPro" id="IPR044772">
    <property type="entry name" value="NO3_transporter"/>
</dbReference>
<dbReference type="PANTHER" id="PTHR23515">
    <property type="entry name" value="HIGH-AFFINITY NITRATE TRANSPORTER 2.3"/>
    <property type="match status" value="1"/>
</dbReference>
<dbReference type="Pfam" id="PF07690">
    <property type="entry name" value="MFS_1"/>
    <property type="match status" value="1"/>
</dbReference>
<dbReference type="SUPFAM" id="SSF103473">
    <property type="entry name" value="MFS general substrate transporter"/>
    <property type="match status" value="1"/>
</dbReference>
<dbReference type="PROSITE" id="PS50850">
    <property type="entry name" value="MFS"/>
    <property type="match status" value="1"/>
</dbReference>
<keyword id="KW-1003">Cell membrane</keyword>
<keyword id="KW-0472">Membrane</keyword>
<keyword id="KW-0534">Nitrate assimilation</keyword>
<keyword id="KW-0812">Transmembrane</keyword>
<keyword id="KW-1133">Transmembrane helix</keyword>
<keyword id="KW-0813">Transport</keyword>
<sequence>MYKTKGGFQLTLQTLSLVVGFMAWSIIAPLMPFIKQDVNVTEGQISIILAIPVILGSVLRVPFGYLTNIVGAKWVFFTSFIVLLFPIFFLSQAQTPGMLMASGFFLGVGGAIFSVGVTSVPKYFPKEKVGLANGIYGMGNIGTAVSSFLAPPIAGIIGWQTTVRSYLIIIALFALIMFIFGDTQERKIKVPLMAQMKTLSKNYKLYYLSYWYFITFGAFVAFGIFLPNYLVNHFGIDKVDAGIRSGVFIALATFLRPIGGILGDKFNAVKVLMIDFVIMIIGAVILGISDHIALFTVGCLTISICAGIGNGLIFKLVPSYFSNEAGSANGIVSMMGGLGGFFPPLVITYVANLTGSSHLAFIFLAVFGCIALFTMRHLYQKEYGSLKHS</sequence>
<evidence type="ECO:0000250" key="1"/>
<evidence type="ECO:0000255" key="2"/>
<evidence type="ECO:0000305" key="3"/>
<reference key="1">
    <citation type="submission" date="2007-05" db="EMBL/GenBank/DDBJ databases">
        <title>Complete sequence of chromosome of Staphylococcus aureus subsp. aureus JH9.</title>
        <authorList>
            <consortium name="US DOE Joint Genome Institute"/>
            <person name="Copeland A."/>
            <person name="Lucas S."/>
            <person name="Lapidus A."/>
            <person name="Barry K."/>
            <person name="Detter J.C."/>
            <person name="Glavina del Rio T."/>
            <person name="Hammon N."/>
            <person name="Israni S."/>
            <person name="Pitluck S."/>
            <person name="Chain P."/>
            <person name="Malfatti S."/>
            <person name="Shin M."/>
            <person name="Vergez L."/>
            <person name="Schmutz J."/>
            <person name="Larimer F."/>
            <person name="Land M."/>
            <person name="Hauser L."/>
            <person name="Kyrpides N."/>
            <person name="Kim E."/>
            <person name="Tomasz A."/>
            <person name="Richardson P."/>
        </authorList>
    </citation>
    <scope>NUCLEOTIDE SEQUENCE [LARGE SCALE GENOMIC DNA]</scope>
    <source>
        <strain>JH9</strain>
    </source>
</reference>
<proteinExistence type="inferred from homology"/>
<feature type="chain" id="PRO_0000349389" description="Probable nitrate transporter NarT">
    <location>
        <begin position="1"/>
        <end position="389"/>
    </location>
</feature>
<feature type="transmembrane region" description="Helical" evidence="2">
    <location>
        <begin position="14"/>
        <end position="34"/>
    </location>
</feature>
<feature type="transmembrane region" description="Helical" evidence="2">
    <location>
        <begin position="45"/>
        <end position="65"/>
    </location>
</feature>
<feature type="transmembrane region" description="Helical" evidence="2">
    <location>
        <begin position="69"/>
        <end position="89"/>
    </location>
</feature>
<feature type="transmembrane region" description="Helical" evidence="2">
    <location>
        <begin position="97"/>
        <end position="117"/>
    </location>
</feature>
<feature type="transmembrane region" description="Helical" evidence="2">
    <location>
        <begin position="139"/>
        <end position="159"/>
    </location>
</feature>
<feature type="transmembrane region" description="Helical" evidence="2">
    <location>
        <begin position="161"/>
        <end position="181"/>
    </location>
</feature>
<feature type="transmembrane region" description="Helical" evidence="2">
    <location>
        <begin position="211"/>
        <end position="231"/>
    </location>
</feature>
<feature type="transmembrane region" description="Helical" evidence="2">
    <location>
        <begin position="246"/>
        <end position="266"/>
    </location>
</feature>
<feature type="transmembrane region" description="Helical" evidence="2">
    <location>
        <begin position="268"/>
        <end position="288"/>
    </location>
</feature>
<feature type="transmembrane region" description="Helical" evidence="2">
    <location>
        <begin position="294"/>
        <end position="314"/>
    </location>
</feature>
<feature type="transmembrane region" description="Helical" evidence="2">
    <location>
        <begin position="331"/>
        <end position="351"/>
    </location>
</feature>
<feature type="transmembrane region" description="Helical" evidence="2">
    <location>
        <begin position="353"/>
        <end position="373"/>
    </location>
</feature>
<accession>A5IVG9</accession>
<comment type="function">
    <text evidence="1">Probably required for nitrate uptake under anoxic conditions. Also possibly involved in excretion of nitrite produced by the dissimilatory reduction of nitrate (By similarity).</text>
</comment>
<comment type="subcellular location">
    <subcellularLocation>
        <location evidence="3">Cell membrane</location>
        <topology evidence="3">Multi-pass membrane protein</topology>
    </subcellularLocation>
</comment>
<comment type="induction">
    <text evidence="1">Positively regulated by the two-component system NreB/NreC.</text>
</comment>
<comment type="similarity">
    <text evidence="3">Belongs to the major facilitator superfamily. Nitrate/nitrite porter (TC 2.A.1.8) family.</text>
</comment>
<organism>
    <name type="scientific">Staphylococcus aureus (strain JH9)</name>
    <dbReference type="NCBI Taxonomy" id="359786"/>
    <lineage>
        <taxon>Bacteria</taxon>
        <taxon>Bacillati</taxon>
        <taxon>Bacillota</taxon>
        <taxon>Bacilli</taxon>
        <taxon>Bacillales</taxon>
        <taxon>Staphylococcaceae</taxon>
        <taxon>Staphylococcus</taxon>
    </lineage>
</organism>
<gene>
    <name type="primary">narT</name>
    <name type="synonym">narK</name>
    <name type="ordered locus">SaurJH9_2412</name>
</gene>
<name>NART_STAA9</name>
<protein>
    <recommendedName>
        <fullName>Probable nitrate transporter NarT</fullName>
    </recommendedName>
</protein>